<gene>
    <name evidence="1" type="primary">surE</name>
    <name type="ordered locus">Tpen_1004</name>
</gene>
<dbReference type="EC" id="3.1.3.5" evidence="1"/>
<dbReference type="EMBL" id="CP000505">
    <property type="protein sequence ID" value="ABL78404.1"/>
    <property type="molecule type" value="Genomic_DNA"/>
</dbReference>
<dbReference type="RefSeq" id="WP_011752669.1">
    <property type="nucleotide sequence ID" value="NC_008698.1"/>
</dbReference>
<dbReference type="SMR" id="A1RYX4"/>
<dbReference type="STRING" id="368408.Tpen_1004"/>
<dbReference type="EnsemblBacteria" id="ABL78404">
    <property type="protein sequence ID" value="ABL78404"/>
    <property type="gene ID" value="Tpen_1004"/>
</dbReference>
<dbReference type="GeneID" id="4601560"/>
<dbReference type="KEGG" id="tpe:Tpen_1004"/>
<dbReference type="eggNOG" id="arCOG02303">
    <property type="taxonomic scope" value="Archaea"/>
</dbReference>
<dbReference type="HOGENOM" id="CLU_045192_1_3_2"/>
<dbReference type="OrthoDB" id="26873at2157"/>
<dbReference type="Proteomes" id="UP000000641">
    <property type="component" value="Chromosome"/>
</dbReference>
<dbReference type="GO" id="GO:0005737">
    <property type="term" value="C:cytoplasm"/>
    <property type="evidence" value="ECO:0007669"/>
    <property type="project" value="UniProtKB-SubCell"/>
</dbReference>
<dbReference type="GO" id="GO:0008253">
    <property type="term" value="F:5'-nucleotidase activity"/>
    <property type="evidence" value="ECO:0007669"/>
    <property type="project" value="UniProtKB-UniRule"/>
</dbReference>
<dbReference type="GO" id="GO:0046872">
    <property type="term" value="F:metal ion binding"/>
    <property type="evidence" value="ECO:0007669"/>
    <property type="project" value="UniProtKB-UniRule"/>
</dbReference>
<dbReference type="GO" id="GO:0000166">
    <property type="term" value="F:nucleotide binding"/>
    <property type="evidence" value="ECO:0007669"/>
    <property type="project" value="UniProtKB-KW"/>
</dbReference>
<dbReference type="Gene3D" id="3.40.1210.10">
    <property type="entry name" value="Survival protein SurE-like phosphatase/nucleotidase"/>
    <property type="match status" value="1"/>
</dbReference>
<dbReference type="HAMAP" id="MF_00060">
    <property type="entry name" value="SurE"/>
    <property type="match status" value="1"/>
</dbReference>
<dbReference type="InterPro" id="IPR030048">
    <property type="entry name" value="SurE"/>
</dbReference>
<dbReference type="InterPro" id="IPR002828">
    <property type="entry name" value="SurE-like_Pase/nucleotidase"/>
</dbReference>
<dbReference type="InterPro" id="IPR036523">
    <property type="entry name" value="SurE-like_sf"/>
</dbReference>
<dbReference type="NCBIfam" id="NF010544">
    <property type="entry name" value="PRK13934.1"/>
    <property type="match status" value="1"/>
</dbReference>
<dbReference type="NCBIfam" id="TIGR00087">
    <property type="entry name" value="surE"/>
    <property type="match status" value="1"/>
</dbReference>
<dbReference type="PANTHER" id="PTHR30457">
    <property type="entry name" value="5'-NUCLEOTIDASE SURE"/>
    <property type="match status" value="1"/>
</dbReference>
<dbReference type="PANTHER" id="PTHR30457:SF0">
    <property type="entry name" value="PHOSPHATASE, PUTATIVE (AFU_ORTHOLOGUE AFUA_4G01070)-RELATED"/>
    <property type="match status" value="1"/>
</dbReference>
<dbReference type="Pfam" id="PF01975">
    <property type="entry name" value="SurE"/>
    <property type="match status" value="1"/>
</dbReference>
<dbReference type="SUPFAM" id="SSF64167">
    <property type="entry name" value="SurE-like"/>
    <property type="match status" value="1"/>
</dbReference>
<protein>
    <recommendedName>
        <fullName evidence="1">5'-nucleotidase SurE</fullName>
        <ecNumber evidence="1">3.1.3.5</ecNumber>
    </recommendedName>
    <alternativeName>
        <fullName evidence="1">Nucleoside 5'-monophosphate phosphohydrolase</fullName>
    </alternativeName>
</protein>
<organism>
    <name type="scientific">Thermofilum pendens (strain DSM 2475 / Hrk 5)</name>
    <dbReference type="NCBI Taxonomy" id="368408"/>
    <lineage>
        <taxon>Archaea</taxon>
        <taxon>Thermoproteota</taxon>
        <taxon>Thermoprotei</taxon>
        <taxon>Thermofilales</taxon>
        <taxon>Thermofilaceae</taxon>
        <taxon>Thermofilum</taxon>
    </lineage>
</organism>
<name>SURE_THEPD</name>
<comment type="function">
    <text evidence="1">Nucleotidase that shows phosphatase activity on nucleoside 5'-monophosphates.</text>
</comment>
<comment type="catalytic activity">
    <reaction evidence="1">
        <text>a ribonucleoside 5'-phosphate + H2O = a ribonucleoside + phosphate</text>
        <dbReference type="Rhea" id="RHEA:12484"/>
        <dbReference type="ChEBI" id="CHEBI:15377"/>
        <dbReference type="ChEBI" id="CHEBI:18254"/>
        <dbReference type="ChEBI" id="CHEBI:43474"/>
        <dbReference type="ChEBI" id="CHEBI:58043"/>
        <dbReference type="EC" id="3.1.3.5"/>
    </reaction>
</comment>
<comment type="cofactor">
    <cofactor evidence="1">
        <name>a divalent metal cation</name>
        <dbReference type="ChEBI" id="CHEBI:60240"/>
    </cofactor>
    <text evidence="1">Binds 1 divalent metal cation per subunit.</text>
</comment>
<comment type="subcellular location">
    <subcellularLocation>
        <location evidence="1">Cytoplasm</location>
    </subcellularLocation>
</comment>
<comment type="similarity">
    <text evidence="1">Belongs to the SurE nucleotidase family.</text>
</comment>
<keyword id="KW-0963">Cytoplasm</keyword>
<keyword id="KW-0378">Hydrolase</keyword>
<keyword id="KW-0479">Metal-binding</keyword>
<keyword id="KW-0547">Nucleotide-binding</keyword>
<keyword id="KW-1185">Reference proteome</keyword>
<reference key="1">
    <citation type="journal article" date="2008" name="J. Bacteriol.">
        <title>Genome sequence of Thermofilum pendens reveals an exceptional loss of biosynthetic pathways without genome reduction.</title>
        <authorList>
            <person name="Anderson I."/>
            <person name="Rodriguez J."/>
            <person name="Susanti D."/>
            <person name="Porat I."/>
            <person name="Reich C."/>
            <person name="Ulrich L.E."/>
            <person name="Elkins J.G."/>
            <person name="Mavromatis K."/>
            <person name="Lykidis A."/>
            <person name="Kim E."/>
            <person name="Thompson L.S."/>
            <person name="Nolan M."/>
            <person name="Land M."/>
            <person name="Copeland A."/>
            <person name="Lapidus A."/>
            <person name="Lucas S."/>
            <person name="Detter C."/>
            <person name="Zhulin I.B."/>
            <person name="Olsen G.J."/>
            <person name="Whitman W."/>
            <person name="Mukhopadhyay B."/>
            <person name="Bristow J."/>
            <person name="Kyrpides N."/>
        </authorList>
    </citation>
    <scope>NUCLEOTIDE SEQUENCE [LARGE SCALE GENOMIC DNA]</scope>
    <source>
        <strain>DSM 2475 / Hrk 5</strain>
    </source>
</reference>
<proteinExistence type="inferred from homology"/>
<sequence length="260" mass="27553">MKILVTNDDGPFSPGLAILREAVRGLGEATVVVPETPKSATGLGLTLHKPLRVNRLSLDGEPVYLVSGTPSDVIYIAMNVISGKPDLVVSGVNIGDNLSVQVILTSGTLGAVLQASIEGVPGIAFSAAVDTPEELEEGEYRNFVLRSTKAIVRAVVGEGFPKGVDALNVNFPSVIASDVVVVRPALKRFSTAVVRRKDPQGRPYYWLYGHPVEAEEGSDVHAVLEEGKIAITPLSLSGMLSYSPEALSGIVKKVKEELSR</sequence>
<feature type="chain" id="PRO_1000007797" description="5'-nucleotidase SurE">
    <location>
        <begin position="1"/>
        <end position="260"/>
    </location>
</feature>
<feature type="binding site" evidence="1">
    <location>
        <position position="8"/>
    </location>
    <ligand>
        <name>a divalent metal cation</name>
        <dbReference type="ChEBI" id="CHEBI:60240"/>
    </ligand>
</feature>
<feature type="binding site" evidence="1">
    <location>
        <position position="9"/>
    </location>
    <ligand>
        <name>a divalent metal cation</name>
        <dbReference type="ChEBI" id="CHEBI:60240"/>
    </ligand>
</feature>
<feature type="binding site" evidence="1">
    <location>
        <position position="39"/>
    </location>
    <ligand>
        <name>a divalent metal cation</name>
        <dbReference type="ChEBI" id="CHEBI:60240"/>
    </ligand>
</feature>
<feature type="binding site" evidence="1">
    <location>
        <position position="93"/>
    </location>
    <ligand>
        <name>a divalent metal cation</name>
        <dbReference type="ChEBI" id="CHEBI:60240"/>
    </ligand>
</feature>
<accession>A1RYX4</accession>
<evidence type="ECO:0000255" key="1">
    <source>
        <dbReference type="HAMAP-Rule" id="MF_00060"/>
    </source>
</evidence>